<feature type="chain" id="PRO_0000233224" description="Cytochrome b559 subunit alpha">
    <location>
        <begin position="1"/>
        <end position="82"/>
    </location>
</feature>
<feature type="transmembrane region" description="Helical" evidence="1">
    <location>
        <begin position="22"/>
        <end position="36"/>
    </location>
</feature>
<feature type="binding site" description="axial binding residue" evidence="1">
    <location>
        <position position="24"/>
    </location>
    <ligand>
        <name>heme</name>
        <dbReference type="ChEBI" id="CHEBI:30413"/>
        <note>ligand shared with beta subunit</note>
    </ligand>
    <ligandPart>
        <name>Fe</name>
        <dbReference type="ChEBI" id="CHEBI:18248"/>
    </ligandPart>
</feature>
<reference key="1">
    <citation type="journal article" date="2003" name="Nature">
        <title>The genome of a motile marine Synechococcus.</title>
        <authorList>
            <person name="Palenik B."/>
            <person name="Brahamsha B."/>
            <person name="Larimer F.W."/>
            <person name="Land M.L."/>
            <person name="Hauser L."/>
            <person name="Chain P."/>
            <person name="Lamerdin J.E."/>
            <person name="Regala W."/>
            <person name="Allen E.E."/>
            <person name="McCarren J."/>
            <person name="Paulsen I.T."/>
            <person name="Dufresne A."/>
            <person name="Partensky F."/>
            <person name="Webb E.A."/>
            <person name="Waterbury J."/>
        </authorList>
    </citation>
    <scope>NUCLEOTIDE SEQUENCE [LARGE SCALE GENOMIC DNA]</scope>
    <source>
        <strain>WH8102</strain>
    </source>
</reference>
<evidence type="ECO:0000255" key="1">
    <source>
        <dbReference type="HAMAP-Rule" id="MF_00642"/>
    </source>
</evidence>
<sequence length="82" mass="9153">MAAGSTGERPFFEIITSIRYWVIHFVTLPSIFLAGFLFVSTGLAYDAFGTPRPDAYFQASESKAPVVSQRYEGKSELDVRLK</sequence>
<accession>Q7U9P9</accession>
<proteinExistence type="inferred from homology"/>
<dbReference type="EMBL" id="BX569689">
    <property type="protein sequence ID" value="CAE06719.1"/>
    <property type="molecule type" value="Genomic_DNA"/>
</dbReference>
<dbReference type="RefSeq" id="WP_011127080.1">
    <property type="nucleotide sequence ID" value="NC_005070.1"/>
</dbReference>
<dbReference type="SMR" id="Q7U9P9"/>
<dbReference type="STRING" id="84588.SYNW0204"/>
<dbReference type="KEGG" id="syw:SYNW0204"/>
<dbReference type="eggNOG" id="ENOG5032GCS">
    <property type="taxonomic scope" value="Bacteria"/>
</dbReference>
<dbReference type="HOGENOM" id="CLU_194095_0_0_3"/>
<dbReference type="BioCyc" id="MetaCyc:TX72_RS01015-MONOMER"/>
<dbReference type="Proteomes" id="UP000001422">
    <property type="component" value="Chromosome"/>
</dbReference>
<dbReference type="GO" id="GO:0009523">
    <property type="term" value="C:photosystem II"/>
    <property type="evidence" value="ECO:0007669"/>
    <property type="project" value="UniProtKB-KW"/>
</dbReference>
<dbReference type="GO" id="GO:0031676">
    <property type="term" value="C:plasma membrane-derived thylakoid membrane"/>
    <property type="evidence" value="ECO:0007669"/>
    <property type="project" value="UniProtKB-SubCell"/>
</dbReference>
<dbReference type="GO" id="GO:0009055">
    <property type="term" value="F:electron transfer activity"/>
    <property type="evidence" value="ECO:0007669"/>
    <property type="project" value="UniProtKB-UniRule"/>
</dbReference>
<dbReference type="GO" id="GO:0020037">
    <property type="term" value="F:heme binding"/>
    <property type="evidence" value="ECO:0007669"/>
    <property type="project" value="InterPro"/>
</dbReference>
<dbReference type="GO" id="GO:0005506">
    <property type="term" value="F:iron ion binding"/>
    <property type="evidence" value="ECO:0007669"/>
    <property type="project" value="UniProtKB-UniRule"/>
</dbReference>
<dbReference type="GO" id="GO:0009767">
    <property type="term" value="P:photosynthetic electron transport chain"/>
    <property type="evidence" value="ECO:0007669"/>
    <property type="project" value="InterPro"/>
</dbReference>
<dbReference type="Gene3D" id="1.20.5.860">
    <property type="entry name" value="Photosystem II cytochrome b559, alpha subunit"/>
    <property type="match status" value="1"/>
</dbReference>
<dbReference type="HAMAP" id="MF_00642">
    <property type="entry name" value="PSII_PsbE"/>
    <property type="match status" value="1"/>
</dbReference>
<dbReference type="InterPro" id="IPR006217">
    <property type="entry name" value="PSII_cyt_b559_asu"/>
</dbReference>
<dbReference type="InterPro" id="IPR037025">
    <property type="entry name" value="PSII_cyt_b559_asu_sf"/>
</dbReference>
<dbReference type="InterPro" id="IPR013081">
    <property type="entry name" value="PSII_cyt_b559_N"/>
</dbReference>
<dbReference type="InterPro" id="IPR013082">
    <property type="entry name" value="PSII_cytb559_asu_lum"/>
</dbReference>
<dbReference type="NCBIfam" id="TIGR01332">
    <property type="entry name" value="cyt_b559_alpha"/>
    <property type="match status" value="1"/>
</dbReference>
<dbReference type="PANTHER" id="PTHR33391">
    <property type="entry name" value="CYTOCHROME B559 SUBUNIT BETA-RELATED"/>
    <property type="match status" value="1"/>
</dbReference>
<dbReference type="PANTHER" id="PTHR33391:SF9">
    <property type="entry name" value="CYTOCHROME B559 SUBUNIT BETA-RELATED"/>
    <property type="match status" value="1"/>
</dbReference>
<dbReference type="Pfam" id="PF00283">
    <property type="entry name" value="Cytochrom_B559"/>
    <property type="match status" value="1"/>
</dbReference>
<dbReference type="Pfam" id="PF00284">
    <property type="entry name" value="Cytochrom_B559a"/>
    <property type="match status" value="1"/>
</dbReference>
<dbReference type="PIRSF" id="PIRSF000036">
    <property type="entry name" value="PsbE"/>
    <property type="match status" value="1"/>
</dbReference>
<dbReference type="SUPFAM" id="SSF161045">
    <property type="entry name" value="Cytochrome b559 subunits"/>
    <property type="match status" value="1"/>
</dbReference>
<name>PSBE_PARMW</name>
<protein>
    <recommendedName>
        <fullName evidence="1">Cytochrome b559 subunit alpha</fullName>
    </recommendedName>
    <alternativeName>
        <fullName evidence="1">PSII reaction center subunit V</fullName>
    </alternativeName>
</protein>
<gene>
    <name evidence="1" type="primary">psbE</name>
    <name type="ordered locus">SYNW0204</name>
</gene>
<organism>
    <name type="scientific">Parasynechococcus marenigrum (strain WH8102)</name>
    <dbReference type="NCBI Taxonomy" id="84588"/>
    <lineage>
        <taxon>Bacteria</taxon>
        <taxon>Bacillati</taxon>
        <taxon>Cyanobacteriota</taxon>
        <taxon>Cyanophyceae</taxon>
        <taxon>Synechococcales</taxon>
        <taxon>Prochlorococcaceae</taxon>
        <taxon>Parasynechococcus</taxon>
        <taxon>Parasynechococcus marenigrum</taxon>
    </lineage>
</organism>
<comment type="function">
    <text evidence="1">This b-type cytochrome is tightly associated with the reaction center of photosystem II (PSII). PSII is a light-driven water:plastoquinone oxidoreductase that uses light energy to abstract electrons from H(2)O, generating O(2) and a proton gradient subsequently used for ATP formation. It consists of a core antenna complex that captures photons, and an electron transfer chain that converts photonic excitation into a charge separation.</text>
</comment>
<comment type="cofactor">
    <cofactor evidence="1">
        <name>heme b</name>
        <dbReference type="ChEBI" id="CHEBI:60344"/>
    </cofactor>
    <text evidence="1">With its partner (PsbF) binds heme. PSII binds additional chlorophylls, carotenoids and specific lipids.</text>
</comment>
<comment type="subunit">
    <text evidence="1">Heterodimer of an alpha subunit and a beta subunit. PSII is composed of 1 copy each of membrane proteins PsbA, PsbB, PsbC, PsbD, PsbE, PsbF, PsbH, PsbI, PsbJ, PsbK, PsbL, PsbM, PsbT, PsbX, PsbY, PsbZ, Psb30/Ycf12, peripheral proteins PsbO, CyanoQ (PsbQ), PsbU, PsbV and a large number of cofactors. It forms dimeric complexes.</text>
</comment>
<comment type="subcellular location">
    <subcellularLocation>
        <location evidence="1">Cellular thylakoid membrane</location>
        <topology evidence="1">Single-pass membrane protein</topology>
    </subcellularLocation>
</comment>
<comment type="similarity">
    <text evidence="1">Belongs to the PsbE/PsbF family.</text>
</comment>
<keyword id="KW-0249">Electron transport</keyword>
<keyword id="KW-0349">Heme</keyword>
<keyword id="KW-0408">Iron</keyword>
<keyword id="KW-0472">Membrane</keyword>
<keyword id="KW-0479">Metal-binding</keyword>
<keyword id="KW-0602">Photosynthesis</keyword>
<keyword id="KW-0604">Photosystem II</keyword>
<keyword id="KW-0793">Thylakoid</keyword>
<keyword id="KW-0812">Transmembrane</keyword>
<keyword id="KW-1133">Transmembrane helix</keyword>
<keyword id="KW-0813">Transport</keyword>